<reference key="1">
    <citation type="submission" date="1997-09" db="EMBL/GenBank/DDBJ databases">
        <title>Cloning and characterization of succinyl-CoA-ligase from Arabidopsis thaliana.</title>
        <authorList>
            <person name="Machuy N."/>
            <person name="Klein M."/>
            <person name="Mueller-Roeber B."/>
        </authorList>
    </citation>
    <scope>NUCLEOTIDE SEQUENCE [MRNA]</scope>
    <source>
        <strain>cv. C24</strain>
    </source>
</reference>
<reference key="2">
    <citation type="journal article" date="2000" name="Nature">
        <title>Sequence and analysis of chromosome 5 of the plant Arabidopsis thaliana.</title>
        <authorList>
            <person name="Tabata S."/>
            <person name="Kaneko T."/>
            <person name="Nakamura Y."/>
            <person name="Kotani H."/>
            <person name="Kato T."/>
            <person name="Asamizu E."/>
            <person name="Miyajima N."/>
            <person name="Sasamoto S."/>
            <person name="Kimura T."/>
            <person name="Hosouchi T."/>
            <person name="Kawashima K."/>
            <person name="Kohara M."/>
            <person name="Matsumoto M."/>
            <person name="Matsuno A."/>
            <person name="Muraki A."/>
            <person name="Nakayama S."/>
            <person name="Nakazaki N."/>
            <person name="Naruo K."/>
            <person name="Okumura S."/>
            <person name="Shinpo S."/>
            <person name="Takeuchi C."/>
            <person name="Wada T."/>
            <person name="Watanabe A."/>
            <person name="Yamada M."/>
            <person name="Yasuda M."/>
            <person name="Sato S."/>
            <person name="de la Bastide M."/>
            <person name="Huang E."/>
            <person name="Spiegel L."/>
            <person name="Gnoj L."/>
            <person name="O'Shaughnessy A."/>
            <person name="Preston R."/>
            <person name="Habermann K."/>
            <person name="Murray J."/>
            <person name="Johnson D."/>
            <person name="Rohlfing T."/>
            <person name="Nelson J."/>
            <person name="Stoneking T."/>
            <person name="Pepin K."/>
            <person name="Spieth J."/>
            <person name="Sekhon M."/>
            <person name="Armstrong J."/>
            <person name="Becker M."/>
            <person name="Belter E."/>
            <person name="Cordum H."/>
            <person name="Cordes M."/>
            <person name="Courtney L."/>
            <person name="Courtney W."/>
            <person name="Dante M."/>
            <person name="Du H."/>
            <person name="Edwards J."/>
            <person name="Fryman J."/>
            <person name="Haakensen B."/>
            <person name="Lamar E."/>
            <person name="Latreille P."/>
            <person name="Leonard S."/>
            <person name="Meyer R."/>
            <person name="Mulvaney E."/>
            <person name="Ozersky P."/>
            <person name="Riley A."/>
            <person name="Strowmatt C."/>
            <person name="Wagner-McPherson C."/>
            <person name="Wollam A."/>
            <person name="Yoakum M."/>
            <person name="Bell M."/>
            <person name="Dedhia N."/>
            <person name="Parnell L."/>
            <person name="Shah R."/>
            <person name="Rodriguez M."/>
            <person name="Hoon See L."/>
            <person name="Vil D."/>
            <person name="Baker J."/>
            <person name="Kirchoff K."/>
            <person name="Toth K."/>
            <person name="King L."/>
            <person name="Bahret A."/>
            <person name="Miller B."/>
            <person name="Marra M.A."/>
            <person name="Martienssen R."/>
            <person name="McCombie W.R."/>
            <person name="Wilson R.K."/>
            <person name="Murphy G."/>
            <person name="Bancroft I."/>
            <person name="Volckaert G."/>
            <person name="Wambutt R."/>
            <person name="Duesterhoeft A."/>
            <person name="Stiekema W."/>
            <person name="Pohl T."/>
            <person name="Entian K.-D."/>
            <person name="Terryn N."/>
            <person name="Hartley N."/>
            <person name="Bent E."/>
            <person name="Johnson S."/>
            <person name="Langham S.-A."/>
            <person name="McCullagh B."/>
            <person name="Robben J."/>
            <person name="Grymonprez B."/>
            <person name="Zimmermann W."/>
            <person name="Ramsperger U."/>
            <person name="Wedler H."/>
            <person name="Balke K."/>
            <person name="Wedler E."/>
            <person name="Peters S."/>
            <person name="van Staveren M."/>
            <person name="Dirkse W."/>
            <person name="Mooijman P."/>
            <person name="Klein Lankhorst R."/>
            <person name="Weitzenegger T."/>
            <person name="Bothe G."/>
            <person name="Rose M."/>
            <person name="Hauf J."/>
            <person name="Berneiser S."/>
            <person name="Hempel S."/>
            <person name="Feldpausch M."/>
            <person name="Lamberth S."/>
            <person name="Villarroel R."/>
            <person name="Gielen J."/>
            <person name="Ardiles W."/>
            <person name="Bents O."/>
            <person name="Lemcke K."/>
            <person name="Kolesov G."/>
            <person name="Mayer K.F.X."/>
            <person name="Rudd S."/>
            <person name="Schoof H."/>
            <person name="Schueller C."/>
            <person name="Zaccaria P."/>
            <person name="Mewes H.-W."/>
            <person name="Bevan M."/>
            <person name="Fransz P.F."/>
        </authorList>
    </citation>
    <scope>NUCLEOTIDE SEQUENCE [LARGE SCALE GENOMIC DNA]</scope>
    <source>
        <strain>cv. Columbia</strain>
    </source>
</reference>
<reference key="3">
    <citation type="journal article" date="2017" name="Plant J.">
        <title>Araport11: a complete reannotation of the Arabidopsis thaliana reference genome.</title>
        <authorList>
            <person name="Cheng C.Y."/>
            <person name="Krishnakumar V."/>
            <person name="Chan A.P."/>
            <person name="Thibaud-Nissen F."/>
            <person name="Schobel S."/>
            <person name="Town C.D."/>
        </authorList>
    </citation>
    <scope>GENOME REANNOTATION</scope>
    <source>
        <strain>cv. Columbia</strain>
    </source>
</reference>
<reference key="4">
    <citation type="journal article" date="2003" name="Science">
        <title>Empirical analysis of transcriptional activity in the Arabidopsis genome.</title>
        <authorList>
            <person name="Yamada K."/>
            <person name="Lim J."/>
            <person name="Dale J.M."/>
            <person name="Chen H."/>
            <person name="Shinn P."/>
            <person name="Palm C.J."/>
            <person name="Southwick A.M."/>
            <person name="Wu H.C."/>
            <person name="Kim C.J."/>
            <person name="Nguyen M."/>
            <person name="Pham P.K."/>
            <person name="Cheuk R.F."/>
            <person name="Karlin-Newmann G."/>
            <person name="Liu S.X."/>
            <person name="Lam B."/>
            <person name="Sakano H."/>
            <person name="Wu T."/>
            <person name="Yu G."/>
            <person name="Miranda M."/>
            <person name="Quach H.L."/>
            <person name="Tripp M."/>
            <person name="Chang C.H."/>
            <person name="Lee J.M."/>
            <person name="Toriumi M.J."/>
            <person name="Chan M.M."/>
            <person name="Tang C.C."/>
            <person name="Onodera C.S."/>
            <person name="Deng J.M."/>
            <person name="Akiyama K."/>
            <person name="Ansari Y."/>
            <person name="Arakawa T."/>
            <person name="Banh J."/>
            <person name="Banno F."/>
            <person name="Bowser L."/>
            <person name="Brooks S.Y."/>
            <person name="Carninci P."/>
            <person name="Chao Q."/>
            <person name="Choy N."/>
            <person name="Enju A."/>
            <person name="Goldsmith A.D."/>
            <person name="Gurjal M."/>
            <person name="Hansen N.F."/>
            <person name="Hayashizaki Y."/>
            <person name="Johnson-Hopson C."/>
            <person name="Hsuan V.W."/>
            <person name="Iida K."/>
            <person name="Karnes M."/>
            <person name="Khan S."/>
            <person name="Koesema E."/>
            <person name="Ishida J."/>
            <person name="Jiang P.X."/>
            <person name="Jones T."/>
            <person name="Kawai J."/>
            <person name="Kamiya A."/>
            <person name="Meyers C."/>
            <person name="Nakajima M."/>
            <person name="Narusaka M."/>
            <person name="Seki M."/>
            <person name="Sakurai T."/>
            <person name="Satou M."/>
            <person name="Tamse R."/>
            <person name="Vaysberg M."/>
            <person name="Wallender E.K."/>
            <person name="Wong C."/>
            <person name="Yamamura Y."/>
            <person name="Yuan S."/>
            <person name="Shinozaki K."/>
            <person name="Davis R.W."/>
            <person name="Theologis A."/>
            <person name="Ecker J.R."/>
        </authorList>
    </citation>
    <scope>NUCLEOTIDE SEQUENCE [LARGE SCALE MRNA]</scope>
    <source>
        <strain>cv. Columbia</strain>
    </source>
</reference>
<reference key="5">
    <citation type="submission" date="2002-03" db="EMBL/GenBank/DDBJ databases">
        <title>Full-length cDNA from Arabidopsis thaliana.</title>
        <authorList>
            <person name="Brover V.V."/>
            <person name="Troukhan M.E."/>
            <person name="Alexandrov N.A."/>
            <person name="Lu Y.-P."/>
            <person name="Flavell R.B."/>
            <person name="Feldmann K.A."/>
        </authorList>
    </citation>
    <scope>NUCLEOTIDE SEQUENCE [LARGE SCALE MRNA]</scope>
</reference>
<reference key="6">
    <citation type="journal article" date="2001" name="Plant Physiol.">
        <title>Proteomic approach to identify novel mitochondrial proteins in Arabidopsis.</title>
        <authorList>
            <person name="Kruft V."/>
            <person name="Eubel H."/>
            <person name="Jaensch L."/>
            <person name="Werhahn W."/>
            <person name="Braun H.-P."/>
        </authorList>
    </citation>
    <scope>PROTEIN SEQUENCE OF 43-56</scope>
    <scope>SUBCELLULAR LOCATION</scope>
    <source>
        <tissue>Leaf</tissue>
        <tissue>Stem</tissue>
    </source>
</reference>
<reference key="7">
    <citation type="journal article" date="2004" name="Plant Cell">
        <title>Experimental analysis of the Arabidopsis mitochondrial proteome highlights signaling and regulatory components, provides assessment of targeting prediction programs, and indicates plant-specific mitochondrial proteins.</title>
        <authorList>
            <person name="Heazlewood J.L."/>
            <person name="Tonti-Filippini J.S."/>
            <person name="Gout A.M."/>
            <person name="Day D.A."/>
            <person name="Whelan J."/>
            <person name="Millar A.H."/>
        </authorList>
    </citation>
    <scope>IDENTIFICATION BY MASS SPECTROMETRY</scope>
    <scope>SUBCELLULAR LOCATION [LARGE SCALE ANALYSIS]</scope>
    <source>
        <strain>cv. Landsberg erecta</strain>
    </source>
</reference>
<reference key="8">
    <citation type="journal article" date="2015" name="J. Exp. Bot.">
        <title>Identification of cleavage sites and substrate proteins for two mitochondrial intermediate peptidases in Arabidopsis thaliana.</title>
        <authorList>
            <person name="Carrie C."/>
            <person name="Venne A.S."/>
            <person name="Zahedi R.P."/>
            <person name="Soll J."/>
        </authorList>
    </citation>
    <scope>IDENTIFICATION BY MASS SPECTROMETRY</scope>
    <scope>CLEAVAGE OF TRANSIT PEPTIDE AFTER PHE-42</scope>
</reference>
<proteinExistence type="evidence at protein level"/>
<sequence length="347" mass="36152">MSRQVARLIGSLSSKARRCSTGGSEVFPSCQSLTSLTQSRSFASDPHPPAAVFVDKNTRVLCQGITGKNGTFHTEQAIEYGTKMVAGVTPKKGGTEHLGLPVFNSVAEAKADTKANASVIYVPAPFAAAAIMEGIEAELDLIVCITEGIPQHDMVRVKHALNSQSKTRLIGPNCPGIIKPGECKIGIMPGYIHKPGKIGIVSRSGTLTYEAVFQTTAVGLGQSTCVGIGGDPFNGTNFVDCLEKFFVDPQTEGIVLIGEIGGTAEEDAAALIKASGTEKPVVAFIAGLTAPPGRRMGHAGAIVSGGKGTAQDKIKSLNDAGVKVVESPAKIGSAMYELFQERGLLKQ</sequence>
<dbReference type="EC" id="6.2.1.5" evidence="1"/>
<dbReference type="EMBL" id="AJ001807">
    <property type="protein sequence ID" value="CAA05023.1"/>
    <property type="molecule type" value="mRNA"/>
</dbReference>
<dbReference type="EMBL" id="AL392174">
    <property type="protein sequence ID" value="CAC08330.1"/>
    <property type="molecule type" value="Genomic_DNA"/>
</dbReference>
<dbReference type="EMBL" id="CP002688">
    <property type="protein sequence ID" value="AED91279.1"/>
    <property type="molecule type" value="Genomic_DNA"/>
</dbReference>
<dbReference type="EMBL" id="AY072333">
    <property type="protein sequence ID" value="AAL61940.1"/>
    <property type="molecule type" value="mRNA"/>
</dbReference>
<dbReference type="EMBL" id="AY114613">
    <property type="protein sequence ID" value="AAM47932.1"/>
    <property type="molecule type" value="mRNA"/>
</dbReference>
<dbReference type="EMBL" id="AY084298">
    <property type="protein sequence ID" value="AAM60889.1"/>
    <property type="molecule type" value="mRNA"/>
</dbReference>
<dbReference type="PIR" id="T51816">
    <property type="entry name" value="T51816"/>
</dbReference>
<dbReference type="RefSeq" id="NP_196447.1">
    <property type="nucleotide sequence ID" value="NM_120913.6"/>
</dbReference>
<dbReference type="SMR" id="P68209"/>
<dbReference type="BioGRID" id="16004">
    <property type="interactions" value="18"/>
</dbReference>
<dbReference type="FunCoup" id="P68209">
    <property type="interactions" value="3479"/>
</dbReference>
<dbReference type="STRING" id="3702.P68209"/>
<dbReference type="iPTMnet" id="P68209"/>
<dbReference type="MetOSite" id="P68209"/>
<dbReference type="PaxDb" id="3702-AT5G08300.1"/>
<dbReference type="ProteomicsDB" id="245356"/>
<dbReference type="EnsemblPlants" id="AT5G08300.1">
    <property type="protein sequence ID" value="AT5G08300.1"/>
    <property type="gene ID" value="AT5G08300"/>
</dbReference>
<dbReference type="GeneID" id="830726"/>
<dbReference type="Gramene" id="AT5G08300.1">
    <property type="protein sequence ID" value="AT5G08300.1"/>
    <property type="gene ID" value="AT5G08300"/>
</dbReference>
<dbReference type="KEGG" id="ath:AT5G08300"/>
<dbReference type="Araport" id="AT5G08300"/>
<dbReference type="TAIR" id="AT5G08300"/>
<dbReference type="eggNOG" id="KOG1255">
    <property type="taxonomic scope" value="Eukaryota"/>
</dbReference>
<dbReference type="HOGENOM" id="CLU_052104_0_0_1"/>
<dbReference type="InParanoid" id="P68209"/>
<dbReference type="OMA" id="MPGSIFR"/>
<dbReference type="OrthoDB" id="1664372at2759"/>
<dbReference type="PhylomeDB" id="P68209"/>
<dbReference type="BioCyc" id="ARA:AT5G08300-MONOMER"/>
<dbReference type="UniPathway" id="UPA00223">
    <property type="reaction ID" value="UER00999"/>
</dbReference>
<dbReference type="CD-CODE" id="4299E36E">
    <property type="entry name" value="Nucleolus"/>
</dbReference>
<dbReference type="PRO" id="PR:P68209"/>
<dbReference type="Proteomes" id="UP000006548">
    <property type="component" value="Chromosome 5"/>
</dbReference>
<dbReference type="ExpressionAtlas" id="P68209">
    <property type="expression patterns" value="baseline and differential"/>
</dbReference>
<dbReference type="GO" id="GO:0005829">
    <property type="term" value="C:cytosol"/>
    <property type="evidence" value="ECO:0007005"/>
    <property type="project" value="TAIR"/>
</dbReference>
<dbReference type="GO" id="GO:0005739">
    <property type="term" value="C:mitochondrion"/>
    <property type="evidence" value="ECO:0000314"/>
    <property type="project" value="TAIR"/>
</dbReference>
<dbReference type="GO" id="GO:0009505">
    <property type="term" value="C:plant-type cell wall"/>
    <property type="evidence" value="ECO:0007005"/>
    <property type="project" value="TAIR"/>
</dbReference>
<dbReference type="GO" id="GO:0005886">
    <property type="term" value="C:plasma membrane"/>
    <property type="evidence" value="ECO:0007005"/>
    <property type="project" value="TAIR"/>
</dbReference>
<dbReference type="GO" id="GO:0005507">
    <property type="term" value="F:copper ion binding"/>
    <property type="evidence" value="ECO:0007005"/>
    <property type="project" value="TAIR"/>
</dbReference>
<dbReference type="GO" id="GO:0046872">
    <property type="term" value="F:metal ion binding"/>
    <property type="evidence" value="ECO:0000314"/>
    <property type="project" value="TAIR"/>
</dbReference>
<dbReference type="GO" id="GO:0000166">
    <property type="term" value="F:nucleotide binding"/>
    <property type="evidence" value="ECO:0007669"/>
    <property type="project" value="UniProtKB-KW"/>
</dbReference>
<dbReference type="GO" id="GO:0004775">
    <property type="term" value="F:succinate-CoA ligase (ADP-forming) activity"/>
    <property type="evidence" value="ECO:0007669"/>
    <property type="project" value="UniProtKB-UniRule"/>
</dbReference>
<dbReference type="GO" id="GO:0006099">
    <property type="term" value="P:tricarboxylic acid cycle"/>
    <property type="evidence" value="ECO:0007669"/>
    <property type="project" value="UniProtKB-UniRule"/>
</dbReference>
<dbReference type="FunFam" id="3.40.50.720:FF:000002">
    <property type="entry name" value="Succinate--CoA ligase [ADP-forming] subunit alpha"/>
    <property type="match status" value="1"/>
</dbReference>
<dbReference type="FunFam" id="3.40.50.261:FF:000005">
    <property type="entry name" value="Succinate--CoA ligase [ADP-forming] subunit alpha, mitochondrial"/>
    <property type="match status" value="1"/>
</dbReference>
<dbReference type="Gene3D" id="3.40.50.720">
    <property type="entry name" value="NAD(P)-binding Rossmann-like Domain"/>
    <property type="match status" value="1"/>
</dbReference>
<dbReference type="Gene3D" id="3.40.50.261">
    <property type="entry name" value="Succinyl-CoA synthetase domains"/>
    <property type="match status" value="1"/>
</dbReference>
<dbReference type="HAMAP" id="MF_01988">
    <property type="entry name" value="Succ_CoA_alpha"/>
    <property type="match status" value="1"/>
</dbReference>
<dbReference type="InterPro" id="IPR017440">
    <property type="entry name" value="Cit_synth/succinyl-CoA_lig_AS"/>
</dbReference>
<dbReference type="InterPro" id="IPR033847">
    <property type="entry name" value="Citrt_syn/SCS-alpha_CS"/>
</dbReference>
<dbReference type="InterPro" id="IPR003781">
    <property type="entry name" value="CoA-bd"/>
</dbReference>
<dbReference type="InterPro" id="IPR005810">
    <property type="entry name" value="CoA_lig_alpha"/>
</dbReference>
<dbReference type="InterPro" id="IPR036291">
    <property type="entry name" value="NAD(P)-bd_dom_sf"/>
</dbReference>
<dbReference type="InterPro" id="IPR005811">
    <property type="entry name" value="SUCC_ACL_C"/>
</dbReference>
<dbReference type="InterPro" id="IPR016102">
    <property type="entry name" value="Succinyl-CoA_synth-like"/>
</dbReference>
<dbReference type="NCBIfam" id="NF004230">
    <property type="entry name" value="PRK05678.1"/>
    <property type="match status" value="1"/>
</dbReference>
<dbReference type="NCBIfam" id="TIGR01019">
    <property type="entry name" value="sucCoAalpha"/>
    <property type="match status" value="1"/>
</dbReference>
<dbReference type="PANTHER" id="PTHR11117:SF19">
    <property type="entry name" value="SUCCINATE--COA LIGASE [ADP-FORMING] SUBUNIT ALPHA-1, MITOCHONDRIAL"/>
    <property type="match status" value="1"/>
</dbReference>
<dbReference type="PANTHER" id="PTHR11117">
    <property type="entry name" value="SUCCINYL-COA LIGASE SUBUNIT ALPHA"/>
    <property type="match status" value="1"/>
</dbReference>
<dbReference type="Pfam" id="PF02629">
    <property type="entry name" value="CoA_binding"/>
    <property type="match status" value="1"/>
</dbReference>
<dbReference type="Pfam" id="PF00549">
    <property type="entry name" value="Ligase_CoA"/>
    <property type="match status" value="1"/>
</dbReference>
<dbReference type="PIRSF" id="PIRSF001553">
    <property type="entry name" value="SucCS_alpha"/>
    <property type="match status" value="1"/>
</dbReference>
<dbReference type="PRINTS" id="PR01798">
    <property type="entry name" value="SCOASYNTHASE"/>
</dbReference>
<dbReference type="SMART" id="SM00881">
    <property type="entry name" value="CoA_binding"/>
    <property type="match status" value="1"/>
</dbReference>
<dbReference type="SUPFAM" id="SSF51735">
    <property type="entry name" value="NAD(P)-binding Rossmann-fold domains"/>
    <property type="match status" value="1"/>
</dbReference>
<dbReference type="SUPFAM" id="SSF52210">
    <property type="entry name" value="Succinyl-CoA synthetase domains"/>
    <property type="match status" value="1"/>
</dbReference>
<dbReference type="PROSITE" id="PS01216">
    <property type="entry name" value="SUCCINYL_COA_LIG_1"/>
    <property type="match status" value="1"/>
</dbReference>
<dbReference type="PROSITE" id="PS00399">
    <property type="entry name" value="SUCCINYL_COA_LIG_2"/>
    <property type="match status" value="1"/>
</dbReference>
<name>SUCA1_ARATH</name>
<organism>
    <name type="scientific">Arabidopsis thaliana</name>
    <name type="common">Mouse-ear cress</name>
    <dbReference type="NCBI Taxonomy" id="3702"/>
    <lineage>
        <taxon>Eukaryota</taxon>
        <taxon>Viridiplantae</taxon>
        <taxon>Streptophyta</taxon>
        <taxon>Embryophyta</taxon>
        <taxon>Tracheophyta</taxon>
        <taxon>Spermatophyta</taxon>
        <taxon>Magnoliopsida</taxon>
        <taxon>eudicotyledons</taxon>
        <taxon>Gunneridae</taxon>
        <taxon>Pentapetalae</taxon>
        <taxon>rosids</taxon>
        <taxon>malvids</taxon>
        <taxon>Brassicales</taxon>
        <taxon>Brassicaceae</taxon>
        <taxon>Camelineae</taxon>
        <taxon>Arabidopsis</taxon>
    </lineage>
</organism>
<protein>
    <recommendedName>
        <fullName evidence="1">Succinate--CoA ligase [ADP-forming] subunit alpha-1, mitochondrial</fullName>
        <ecNumber evidence="1">6.2.1.5</ecNumber>
    </recommendedName>
    <alternativeName>
        <fullName evidence="1">Succinyl-CoA synthetase subunit alpha-1</fullName>
        <shortName evidence="1">SCS-alpha-1</shortName>
    </alternativeName>
</protein>
<feature type="transit peptide" description="Mitochondrion" evidence="2 4">
    <location>
        <begin position="1"/>
        <end position="42"/>
    </location>
</feature>
<feature type="chain" id="PRO_0000033335" description="Succinate--CoA ligase [ADP-forming] subunit alpha-1, mitochondrial">
    <location>
        <begin position="43"/>
        <end position="347"/>
    </location>
</feature>
<feature type="active site" description="Tele-phosphohistidine intermediate" evidence="1">
    <location>
        <position position="298"/>
    </location>
</feature>
<feature type="binding site" evidence="1">
    <location>
        <begin position="66"/>
        <end position="69"/>
    </location>
    <ligand>
        <name>CoA</name>
        <dbReference type="ChEBI" id="CHEBI:57287"/>
    </ligand>
</feature>
<feature type="binding site" evidence="1">
    <location>
        <position position="92"/>
    </location>
    <ligand>
        <name>CoA</name>
        <dbReference type="ChEBI" id="CHEBI:57287"/>
    </ligand>
</feature>
<feature type="binding site" evidence="1">
    <location>
        <begin position="145"/>
        <end position="147"/>
    </location>
    <ligand>
        <name>CoA</name>
        <dbReference type="ChEBI" id="CHEBI:57287"/>
    </ligand>
</feature>
<feature type="binding site" evidence="1">
    <location>
        <position position="209"/>
    </location>
    <ligand>
        <name>substrate</name>
        <note>ligand shared with subunit beta</note>
    </ligand>
</feature>
<gene>
    <name type="ordered locus">At5g08300</name>
    <name type="ORF">F8L15_30</name>
</gene>
<accession>P68209</accession>
<accession>O82661</accession>
<accession>P53586</accession>
<comment type="function">
    <text evidence="1">Succinyl-CoA synthetase functions in the citric acid cycle (TCA), coupling the hydrolysis of succinyl-CoA to the synthesis of ATP and thus represents the only step of substrate-level phosphorylation in the TCA. The alpha subunit of the enzyme binds the substrates coenzyme A and phosphate, while succinate binding and nucleotide specificity is provided by the beta subunit.</text>
</comment>
<comment type="catalytic activity">
    <reaction evidence="1">
        <text>succinate + ATP + CoA = succinyl-CoA + ADP + phosphate</text>
        <dbReference type="Rhea" id="RHEA:17661"/>
        <dbReference type="ChEBI" id="CHEBI:30031"/>
        <dbReference type="ChEBI" id="CHEBI:30616"/>
        <dbReference type="ChEBI" id="CHEBI:43474"/>
        <dbReference type="ChEBI" id="CHEBI:57287"/>
        <dbReference type="ChEBI" id="CHEBI:57292"/>
        <dbReference type="ChEBI" id="CHEBI:456216"/>
        <dbReference type="EC" id="6.2.1.5"/>
    </reaction>
</comment>
<comment type="pathway">
    <text evidence="1">Carbohydrate metabolism; tricarboxylic acid cycle; succinate from succinyl-CoA (ligase route): step 1/1.</text>
</comment>
<comment type="subunit">
    <text evidence="1">Heterodimer of an alpha and a beta subunit.</text>
</comment>
<comment type="subcellular location">
    <subcellularLocation>
        <location evidence="1 2 3 5">Mitochondrion</location>
    </subcellularLocation>
</comment>
<comment type="similarity">
    <text evidence="1">Belongs to the succinate/malate CoA ligase alpha subunit family.</text>
</comment>
<evidence type="ECO:0000255" key="1">
    <source>
        <dbReference type="HAMAP-Rule" id="MF_03222"/>
    </source>
</evidence>
<evidence type="ECO:0000269" key="2">
    <source>
    </source>
</evidence>
<evidence type="ECO:0000269" key="3">
    <source>
    </source>
</evidence>
<evidence type="ECO:0000269" key="4">
    <source>
    </source>
</evidence>
<evidence type="ECO:0000305" key="5">
    <source>
    </source>
</evidence>
<keyword id="KW-0903">Direct protein sequencing</keyword>
<keyword id="KW-0436">Ligase</keyword>
<keyword id="KW-0496">Mitochondrion</keyword>
<keyword id="KW-0547">Nucleotide-binding</keyword>
<keyword id="KW-1185">Reference proteome</keyword>
<keyword id="KW-0809">Transit peptide</keyword>
<keyword id="KW-0816">Tricarboxylic acid cycle</keyword>